<accession>P03544</accession>
<organismHost>
    <name type="scientific">Arabidopsis thaliana</name>
    <name type="common">Mouse-ear cress</name>
    <dbReference type="NCBI Taxonomy" id="3702"/>
</organismHost>
<organismHost>
    <name type="scientific">Brassica</name>
    <dbReference type="NCBI Taxonomy" id="3705"/>
</organismHost>
<organismHost>
    <name type="scientific">Raphanus</name>
    <dbReference type="NCBI Taxonomy" id="3725"/>
</organismHost>
<proteinExistence type="inferred from homology"/>
<name>CAPSD_CAMVD</name>
<sequence length="490" mass="56821">MAESILDRTINRFWYKLGDDCLSESQFDLMIRLMEESLDGDQIIDLTSLPSDNLQVEQVMTTTEDSISEEESEFLLAIGETSEEESDSGEEPEFEQVRMDRTGGTEIPKEEDGGEPSRYNERKRKTTEDRYFPTQPKTIPGQKQTTMGMLNIDCQANRRTLIDDWAAEIGLIVKTNREDYLDPETILLLMEHKTSGIAKELIRNTRWNRTTGDIIEQVIDAMYTMFLGLNYSDNKVAEKIEEQEKAKIRMTKLQLCDICYLEEFTCDYEKNMYKTELADFPGYINQYLSKIPIIGEKALTRFRHEANGTSIYSLGFAAKIVKEELSKICDLTKKQKKLKKFNKKCCSIGEASVEYGCKKTSKKKYHKRYKKKYKAYKPYKKKKKFRSGKYFKPKEKKGSKQKYCPKGKKDCRCWICNIEGHYANECPNRQSSEKAHILQQAEKLGLQPIEEPYEGVQEVFILEYKEEEEETSTEEDDGSSTSEDSDSESD</sequence>
<organism>
    <name type="scientific">Cauliflower mosaic virus (strain D/H)</name>
    <name type="common">CaMV</name>
    <dbReference type="NCBI Taxonomy" id="10645"/>
    <lineage>
        <taxon>Viruses</taxon>
        <taxon>Riboviria</taxon>
        <taxon>Pararnavirae</taxon>
        <taxon>Artverviricota</taxon>
        <taxon>Revtraviricetes</taxon>
        <taxon>Ortervirales</taxon>
        <taxon>Caulimoviridae</taxon>
        <taxon>Caulimovirus</taxon>
        <taxon>Caulimovirus tessellobrassicae</taxon>
    </lineage>
</organism>
<gene>
    <name type="ORF">ORF IV</name>
</gene>
<keyword id="KW-0167">Capsid protein</keyword>
<keyword id="KW-1048">Host nucleus</keyword>
<keyword id="KW-0479">Metal-binding</keyword>
<keyword id="KW-1145">T=7 icosahedral capsid protein</keyword>
<keyword id="KW-1163">Viral penetration into host nucleus</keyword>
<keyword id="KW-0946">Virion</keyword>
<keyword id="KW-1160">Virus entry into host cell</keyword>
<keyword id="KW-0862">Zinc</keyword>
<keyword id="KW-0863">Zinc-finger</keyword>
<reference key="1">
    <citation type="journal article" date="1982" name="Gene">
        <title>Nucleotide sequence of DNA from an altered-virulence isolate D/H of the cauliflower mosaic virus.</title>
        <authorList>
            <person name="Balazs E."/>
            <person name="Guilley H."/>
            <person name="Jonard G."/>
            <person name="Richards K."/>
        </authorList>
    </citation>
    <scope>NUCLEOTIDE SEQUENCE [GENOMIC DNA]</scope>
</reference>
<dbReference type="EMBL" id="M10376">
    <property type="protein sequence ID" value="AAA46348.1"/>
    <property type="molecule type" value="Genomic_DNA"/>
</dbReference>
<dbReference type="PIR" id="A04155">
    <property type="entry name" value="VCCV3"/>
</dbReference>
<dbReference type="Proteomes" id="UP000008439">
    <property type="component" value="Genome"/>
</dbReference>
<dbReference type="GO" id="GO:0043657">
    <property type="term" value="C:host cell"/>
    <property type="evidence" value="ECO:0007669"/>
    <property type="project" value="GOC"/>
</dbReference>
<dbReference type="GO" id="GO:0042025">
    <property type="term" value="C:host cell nucleus"/>
    <property type="evidence" value="ECO:0007669"/>
    <property type="project" value="UniProtKB-SubCell"/>
</dbReference>
<dbReference type="GO" id="GO:0039620">
    <property type="term" value="C:T=7 icosahedral viral capsid"/>
    <property type="evidence" value="ECO:0007669"/>
    <property type="project" value="UniProtKB-KW"/>
</dbReference>
<dbReference type="GO" id="GO:0003676">
    <property type="term" value="F:nucleic acid binding"/>
    <property type="evidence" value="ECO:0007669"/>
    <property type="project" value="InterPro"/>
</dbReference>
<dbReference type="GO" id="GO:0005198">
    <property type="term" value="F:structural molecule activity"/>
    <property type="evidence" value="ECO:0007669"/>
    <property type="project" value="InterPro"/>
</dbReference>
<dbReference type="GO" id="GO:0008270">
    <property type="term" value="F:zinc ion binding"/>
    <property type="evidence" value="ECO:0007669"/>
    <property type="project" value="UniProtKB-KW"/>
</dbReference>
<dbReference type="GO" id="GO:0046718">
    <property type="term" value="P:symbiont entry into host cell"/>
    <property type="evidence" value="ECO:0007669"/>
    <property type="project" value="UniProtKB-KW"/>
</dbReference>
<dbReference type="GO" id="GO:0075732">
    <property type="term" value="P:viral penetration into host nucleus"/>
    <property type="evidence" value="ECO:0007669"/>
    <property type="project" value="UniProtKB-KW"/>
</dbReference>
<dbReference type="InterPro" id="IPR001988">
    <property type="entry name" value="Caulimo_coat"/>
</dbReference>
<dbReference type="InterPro" id="IPR001878">
    <property type="entry name" value="Znf_CCHC"/>
</dbReference>
<dbReference type="InterPro" id="IPR036875">
    <property type="entry name" value="Znf_CCHC_sf"/>
</dbReference>
<dbReference type="Pfam" id="PF22909">
    <property type="entry name" value="Caulimovir_coat_dom"/>
    <property type="match status" value="1"/>
</dbReference>
<dbReference type="PRINTS" id="PR00221">
    <property type="entry name" value="CAULIMOCOAT"/>
</dbReference>
<dbReference type="SMART" id="SM00343">
    <property type="entry name" value="ZnF_C2HC"/>
    <property type="match status" value="1"/>
</dbReference>
<dbReference type="SUPFAM" id="SSF57756">
    <property type="entry name" value="Retrovirus zinc finger-like domains"/>
    <property type="match status" value="1"/>
</dbReference>
<dbReference type="PROSITE" id="PS50158">
    <property type="entry name" value="ZF_CCHC"/>
    <property type="match status" value="1"/>
</dbReference>
<feature type="chain" id="PRO_0000222030" description="Capsid protein">
    <location>
        <begin position="1"/>
        <end position="490"/>
    </location>
</feature>
<feature type="zinc finger region" description="CCHC-type" evidence="2">
    <location>
        <begin position="411"/>
        <end position="428"/>
    </location>
</feature>
<feature type="region of interest" description="Disordered" evidence="3">
    <location>
        <begin position="79"/>
        <end position="143"/>
    </location>
</feature>
<feature type="region of interest" description="Disordered" evidence="3">
    <location>
        <begin position="464"/>
        <end position="490"/>
    </location>
</feature>
<feature type="short sequence motif" description="Nuclear localization signal" evidence="1">
    <location>
        <begin position="122"/>
        <end position="125"/>
    </location>
</feature>
<feature type="compositionally biased region" description="Acidic residues" evidence="3">
    <location>
        <begin position="81"/>
        <end position="94"/>
    </location>
</feature>
<feature type="compositionally biased region" description="Basic and acidic residues" evidence="3">
    <location>
        <begin position="95"/>
        <end position="111"/>
    </location>
</feature>
<feature type="compositionally biased region" description="Acidic residues" evidence="3">
    <location>
        <begin position="465"/>
        <end position="490"/>
    </location>
</feature>
<protein>
    <recommendedName>
        <fullName>Capsid protein</fullName>
        <shortName>CP</shortName>
    </recommendedName>
    <alternativeName>
        <fullName>Coat protein</fullName>
    </alternativeName>
</protein>
<evidence type="ECO:0000250" key="1"/>
<evidence type="ECO:0000255" key="2">
    <source>
        <dbReference type="PROSITE-ProRule" id="PRU00047"/>
    </source>
</evidence>
<evidence type="ECO:0000256" key="3">
    <source>
        <dbReference type="SAM" id="MobiDB-lite"/>
    </source>
</evidence>
<evidence type="ECO:0000305" key="4"/>
<comment type="function">
    <text evidence="1">Self assembles to form an icosahedral capsid, about 50 nm in diameter, nm, composed of 420 subunits of the viral capsid protein. The capsid encapsulates the genomic dsDNA. Following virus entry into host cell, provides nuclear import of the viral genome. Virus particles do not enter the nucleus, but dock at the nuclear membrane through the interaction with host importins (By similarity).</text>
</comment>
<comment type="subunit">
    <text evidence="1">Interacts (via nuclear localization signal) with host importin alpha.</text>
</comment>
<comment type="subcellular location">
    <subcellularLocation>
        <location evidence="4">Virion</location>
    </subcellularLocation>
    <subcellularLocation>
        <location evidence="4">Host nucleus</location>
    </subcellularLocation>
</comment>
<comment type="similarity">
    <text evidence="4">Belongs to the caulimoviridae capsid protein family.</text>
</comment>